<comment type="similarity">
    <text evidence="1">Belongs to the bacterial ribosomal protein bL33 family.</text>
</comment>
<gene>
    <name evidence="1" type="primary">rpmG2</name>
    <name type="ordered locus">Strop_3942</name>
</gene>
<accession>A4XBR5</accession>
<organism>
    <name type="scientific">Salinispora tropica (strain ATCC BAA-916 / DSM 44818 / JCM 13857 / NBRC 105044 / CNB-440)</name>
    <dbReference type="NCBI Taxonomy" id="369723"/>
    <lineage>
        <taxon>Bacteria</taxon>
        <taxon>Bacillati</taxon>
        <taxon>Actinomycetota</taxon>
        <taxon>Actinomycetes</taxon>
        <taxon>Micromonosporales</taxon>
        <taxon>Micromonosporaceae</taxon>
        <taxon>Salinispora</taxon>
    </lineage>
</organism>
<feature type="chain" id="PRO_0000356647" description="Large ribosomal subunit protein bL33B">
    <location>
        <begin position="1"/>
        <end position="55"/>
    </location>
</feature>
<protein>
    <recommendedName>
        <fullName evidence="1">Large ribosomal subunit protein bL33B</fullName>
    </recommendedName>
    <alternativeName>
        <fullName evidence="1">50S ribosomal protein L33 2</fullName>
    </alternativeName>
</protein>
<evidence type="ECO:0000255" key="1">
    <source>
        <dbReference type="HAMAP-Rule" id="MF_00294"/>
    </source>
</evidence>
<sequence>MAKATDVRPKITLACVECKERNYITRKNRRNDPDRIELKKFCPREGRHTIHRETR</sequence>
<proteinExistence type="inferred from homology"/>
<keyword id="KW-1185">Reference proteome</keyword>
<keyword id="KW-0687">Ribonucleoprotein</keyword>
<keyword id="KW-0689">Ribosomal protein</keyword>
<reference key="1">
    <citation type="journal article" date="2007" name="Proc. Natl. Acad. Sci. U.S.A.">
        <title>Genome sequencing reveals complex secondary metabolome in the marine actinomycete Salinispora tropica.</title>
        <authorList>
            <person name="Udwary D.W."/>
            <person name="Zeigler L."/>
            <person name="Asolkar R.N."/>
            <person name="Singan V."/>
            <person name="Lapidus A."/>
            <person name="Fenical W."/>
            <person name="Jensen P.R."/>
            <person name="Moore B.S."/>
        </authorList>
    </citation>
    <scope>NUCLEOTIDE SEQUENCE [LARGE SCALE GENOMIC DNA]</scope>
    <source>
        <strain>ATCC BAA-916 / DSM 44818 / JCM 13857 / NBRC 105044 / CNB-440</strain>
    </source>
</reference>
<name>RL332_SALTO</name>
<dbReference type="EMBL" id="CP000667">
    <property type="protein sequence ID" value="ABP56372.1"/>
    <property type="molecule type" value="Genomic_DNA"/>
</dbReference>
<dbReference type="SMR" id="A4XBR5"/>
<dbReference type="STRING" id="369723.Strop_3942"/>
<dbReference type="KEGG" id="stp:Strop_3942"/>
<dbReference type="PATRIC" id="fig|369723.5.peg.4069"/>
<dbReference type="eggNOG" id="COG0267">
    <property type="taxonomic scope" value="Bacteria"/>
</dbReference>
<dbReference type="HOGENOM" id="CLU_190949_0_2_11"/>
<dbReference type="Proteomes" id="UP000000235">
    <property type="component" value="Chromosome"/>
</dbReference>
<dbReference type="GO" id="GO:0005737">
    <property type="term" value="C:cytoplasm"/>
    <property type="evidence" value="ECO:0007669"/>
    <property type="project" value="UniProtKB-ARBA"/>
</dbReference>
<dbReference type="GO" id="GO:1990904">
    <property type="term" value="C:ribonucleoprotein complex"/>
    <property type="evidence" value="ECO:0007669"/>
    <property type="project" value="UniProtKB-KW"/>
</dbReference>
<dbReference type="GO" id="GO:0005840">
    <property type="term" value="C:ribosome"/>
    <property type="evidence" value="ECO:0007669"/>
    <property type="project" value="UniProtKB-KW"/>
</dbReference>
<dbReference type="GO" id="GO:0003735">
    <property type="term" value="F:structural constituent of ribosome"/>
    <property type="evidence" value="ECO:0007669"/>
    <property type="project" value="InterPro"/>
</dbReference>
<dbReference type="GO" id="GO:0006412">
    <property type="term" value="P:translation"/>
    <property type="evidence" value="ECO:0007669"/>
    <property type="project" value="UniProtKB-UniRule"/>
</dbReference>
<dbReference type="Gene3D" id="2.20.28.120">
    <property type="entry name" value="Ribosomal protein L33"/>
    <property type="match status" value="1"/>
</dbReference>
<dbReference type="HAMAP" id="MF_00294">
    <property type="entry name" value="Ribosomal_bL33"/>
    <property type="match status" value="1"/>
</dbReference>
<dbReference type="InterPro" id="IPR001705">
    <property type="entry name" value="Ribosomal_bL33"/>
</dbReference>
<dbReference type="InterPro" id="IPR018264">
    <property type="entry name" value="Ribosomal_bL33_CS"/>
</dbReference>
<dbReference type="InterPro" id="IPR038584">
    <property type="entry name" value="Ribosomal_bL33_sf"/>
</dbReference>
<dbReference type="InterPro" id="IPR011332">
    <property type="entry name" value="Ribosomal_zn-bd"/>
</dbReference>
<dbReference type="NCBIfam" id="NF001764">
    <property type="entry name" value="PRK00504.1"/>
    <property type="match status" value="1"/>
</dbReference>
<dbReference type="NCBIfam" id="NF001860">
    <property type="entry name" value="PRK00595.1"/>
    <property type="match status" value="1"/>
</dbReference>
<dbReference type="NCBIfam" id="TIGR01023">
    <property type="entry name" value="rpmG_bact"/>
    <property type="match status" value="1"/>
</dbReference>
<dbReference type="PANTHER" id="PTHR43168">
    <property type="entry name" value="50S RIBOSOMAL PROTEIN L33, CHLOROPLASTIC"/>
    <property type="match status" value="1"/>
</dbReference>
<dbReference type="PANTHER" id="PTHR43168:SF2">
    <property type="entry name" value="LARGE RIBOSOMAL SUBUNIT PROTEIN BL33C"/>
    <property type="match status" value="1"/>
</dbReference>
<dbReference type="Pfam" id="PF00471">
    <property type="entry name" value="Ribosomal_L33"/>
    <property type="match status" value="1"/>
</dbReference>
<dbReference type="SUPFAM" id="SSF57829">
    <property type="entry name" value="Zn-binding ribosomal proteins"/>
    <property type="match status" value="1"/>
</dbReference>
<dbReference type="PROSITE" id="PS00582">
    <property type="entry name" value="RIBOSOMAL_L33"/>
    <property type="match status" value="1"/>
</dbReference>